<reference evidence="3" key="1">
    <citation type="journal article" date="2005" name="Genome Res.">
        <title>Complete genome sequence of the hyperthermophilic archaeon Thermococcus kodakaraensis KOD1 and comparison with Pyrococcus genomes.</title>
        <authorList>
            <person name="Fukui T."/>
            <person name="Atomi H."/>
            <person name="Kanai T."/>
            <person name="Matsumi R."/>
            <person name="Fujiwara S."/>
            <person name="Imanaka T."/>
        </authorList>
    </citation>
    <scope>NUCLEOTIDE SEQUENCE [LARGE SCALE GENOMIC DNA]</scope>
    <source>
        <strain>ATCC BAA-918 / JCM 12380 / KOD1</strain>
    </source>
</reference>
<reference evidence="4 5 6" key="2">
    <citation type="journal article" date="2020" name="Nature">
        <title>Dynamic RNA acetylation revealed by quantitative cross-evolutionary mapping.</title>
        <authorList>
            <person name="Sas-Chen A."/>
            <person name="Thomas J.M."/>
            <person name="Matzov D."/>
            <person name="Taoka M."/>
            <person name="Nance K.D."/>
            <person name="Nir R."/>
            <person name="Bryson K.M."/>
            <person name="Shachar R."/>
            <person name="Liman G.L.S."/>
            <person name="Burkhart B.W."/>
            <person name="Gamage S.T."/>
            <person name="Nobe Y."/>
            <person name="Briney C.A."/>
            <person name="Levy M.J."/>
            <person name="Fuchs R.T."/>
            <person name="Robb G.B."/>
            <person name="Hartmann J."/>
            <person name="Sharma S."/>
            <person name="Lin Q."/>
            <person name="Florens L."/>
            <person name="Washburn M.P."/>
            <person name="Isobe T."/>
            <person name="Santangelo T.J."/>
            <person name="Shalev-Benami M."/>
            <person name="Meier J.L."/>
            <person name="Schwartz S."/>
        </authorList>
    </citation>
    <scope>STRUCTURE BY ELECTRON MICROSCOPY (2.55 ANGSTROMS) IN 70S RIBOSOME</scope>
    <scope>SUBUNIT</scope>
    <source>
        <strain>ATCC BAA-918 / TS559</strain>
    </source>
</reference>
<name>RS19E_THEKO</name>
<feature type="chain" id="PRO_0000461765" description="Small ribosomal subunit protein eS19">
    <location>
        <begin position="1"/>
        <end position="150"/>
    </location>
</feature>
<organism>
    <name type="scientific">Thermococcus kodakarensis (strain ATCC BAA-918 / JCM 12380 / KOD1)</name>
    <name type="common">Pyrococcus kodakaraensis (strain KOD1)</name>
    <dbReference type="NCBI Taxonomy" id="69014"/>
    <lineage>
        <taxon>Archaea</taxon>
        <taxon>Methanobacteriati</taxon>
        <taxon>Methanobacteriota</taxon>
        <taxon>Thermococci</taxon>
        <taxon>Thermococcales</taxon>
        <taxon>Thermococcaceae</taxon>
        <taxon>Thermococcus</taxon>
    </lineage>
</organism>
<accession>Q5JGN5</accession>
<comment type="function">
    <text evidence="1">May be involved in maturation of the 30S ribosomal subunit.</text>
</comment>
<comment type="subunit">
    <text evidence="1 2">Part of the 30S ribosomal subunit.</text>
</comment>
<comment type="similarity">
    <text evidence="1">Belongs to the eukaryotic ribosomal protein eS19 family.</text>
</comment>
<sequence length="150" mass="17274">MATVYDVPGDLLVERVAKALKEVPEIKPPEWAPFVKTGRHKERLPEQEDWWYYRVASVFRKVYIDGPVGIERLRTWYGGRKNRGHAPEHFYKAGGSIIRKALQQLEAAGFVQKVPGEGRIVTPKGQSFLDKIATELKKELEEQIPELKKY</sequence>
<gene>
    <name evidence="1" type="primary">rps19e</name>
    <name evidence="3" type="ordered locus">TK1276</name>
</gene>
<keyword id="KW-0002">3D-structure</keyword>
<keyword id="KW-1185">Reference proteome</keyword>
<keyword id="KW-0687">Ribonucleoprotein</keyword>
<keyword id="KW-0689">Ribosomal protein</keyword>
<evidence type="ECO:0000255" key="1">
    <source>
        <dbReference type="HAMAP-Rule" id="MF_01474"/>
    </source>
</evidence>
<evidence type="ECO:0000269" key="2">
    <source>
    </source>
</evidence>
<evidence type="ECO:0000312" key="3">
    <source>
        <dbReference type="EMBL" id="BAD85465.1"/>
    </source>
</evidence>
<evidence type="ECO:0007744" key="4">
    <source>
        <dbReference type="PDB" id="6SKF"/>
    </source>
</evidence>
<evidence type="ECO:0007744" key="5">
    <source>
        <dbReference type="PDB" id="6SKG"/>
    </source>
</evidence>
<evidence type="ECO:0007744" key="6">
    <source>
        <dbReference type="PDB" id="6TH6"/>
    </source>
</evidence>
<proteinExistence type="evidence at protein level"/>
<protein>
    <recommendedName>
        <fullName evidence="1">Small ribosomal subunit protein eS19</fullName>
    </recommendedName>
</protein>
<dbReference type="EMBL" id="AP006878">
    <property type="protein sequence ID" value="BAD85465.1"/>
    <property type="molecule type" value="Genomic_DNA"/>
</dbReference>
<dbReference type="RefSeq" id="WP_011250227.1">
    <property type="nucleotide sequence ID" value="NC_006624.1"/>
</dbReference>
<dbReference type="PDB" id="6SKF">
    <property type="method" value="EM"/>
    <property type="resolution" value="2.95 A"/>
    <property type="chains" value="Av=1-150"/>
</dbReference>
<dbReference type="PDB" id="6SKG">
    <property type="method" value="EM"/>
    <property type="resolution" value="2.65 A"/>
    <property type="chains" value="Av=1-150"/>
</dbReference>
<dbReference type="PDB" id="6TH6">
    <property type="method" value="EM"/>
    <property type="resolution" value="2.55 A"/>
    <property type="chains" value="Av=1-150"/>
</dbReference>
<dbReference type="PDBsum" id="6SKF"/>
<dbReference type="PDBsum" id="6SKG"/>
<dbReference type="PDBsum" id="6TH6"/>
<dbReference type="EMDB" id="EMD-10223"/>
<dbReference type="EMDB" id="EMD-10224"/>
<dbReference type="EMDB" id="EMD-10503"/>
<dbReference type="SMR" id="Q5JGN5"/>
<dbReference type="FunCoup" id="Q5JGN5">
    <property type="interactions" value="160"/>
</dbReference>
<dbReference type="IntAct" id="Q5JGN5">
    <property type="interactions" value="1"/>
</dbReference>
<dbReference type="MINT" id="Q5JGN5"/>
<dbReference type="STRING" id="69014.TK1276"/>
<dbReference type="EnsemblBacteria" id="BAD85465">
    <property type="protein sequence ID" value="BAD85465"/>
    <property type="gene ID" value="TK1276"/>
</dbReference>
<dbReference type="GeneID" id="78447793"/>
<dbReference type="KEGG" id="tko:TK1276"/>
<dbReference type="PATRIC" id="fig|69014.16.peg.1248"/>
<dbReference type="eggNOG" id="arCOG01344">
    <property type="taxonomic scope" value="Archaea"/>
</dbReference>
<dbReference type="HOGENOM" id="CLU_108559_1_0_2"/>
<dbReference type="InParanoid" id="Q5JGN5"/>
<dbReference type="OrthoDB" id="371836at2157"/>
<dbReference type="PhylomeDB" id="Q5JGN5"/>
<dbReference type="Proteomes" id="UP000000536">
    <property type="component" value="Chromosome"/>
</dbReference>
<dbReference type="GO" id="GO:0022627">
    <property type="term" value="C:cytosolic small ribosomal subunit"/>
    <property type="evidence" value="ECO:0000318"/>
    <property type="project" value="GO_Central"/>
</dbReference>
<dbReference type="GO" id="GO:0003723">
    <property type="term" value="F:RNA binding"/>
    <property type="evidence" value="ECO:0000318"/>
    <property type="project" value="GO_Central"/>
</dbReference>
<dbReference type="GO" id="GO:0003735">
    <property type="term" value="F:structural constituent of ribosome"/>
    <property type="evidence" value="ECO:0000318"/>
    <property type="project" value="GO_Central"/>
</dbReference>
<dbReference type="GO" id="GO:0000028">
    <property type="term" value="P:ribosomal small subunit assembly"/>
    <property type="evidence" value="ECO:0000318"/>
    <property type="project" value="GO_Central"/>
</dbReference>
<dbReference type="GO" id="GO:0006412">
    <property type="term" value="P:translation"/>
    <property type="evidence" value="ECO:0007669"/>
    <property type="project" value="UniProtKB-UniRule"/>
</dbReference>
<dbReference type="FunFam" id="1.10.10.10:FF:000449">
    <property type="entry name" value="30S ribosomal protein S19e"/>
    <property type="match status" value="1"/>
</dbReference>
<dbReference type="Gene3D" id="1.10.10.10">
    <property type="entry name" value="Winged helix-like DNA-binding domain superfamily/Winged helix DNA-binding domain"/>
    <property type="match status" value="1"/>
</dbReference>
<dbReference type="HAMAP" id="MF_01474">
    <property type="entry name" value="Ribosomal_eS19"/>
    <property type="match status" value="1"/>
</dbReference>
<dbReference type="InterPro" id="IPR001266">
    <property type="entry name" value="Ribosomal_eS19"/>
</dbReference>
<dbReference type="InterPro" id="IPR027548">
    <property type="entry name" value="Ribosomal_eS19_archaeal"/>
</dbReference>
<dbReference type="InterPro" id="IPR018277">
    <property type="entry name" value="Ribosomal_eS19_CS"/>
</dbReference>
<dbReference type="InterPro" id="IPR036388">
    <property type="entry name" value="WH-like_DNA-bd_sf"/>
</dbReference>
<dbReference type="InterPro" id="IPR036390">
    <property type="entry name" value="WH_DNA-bd_sf"/>
</dbReference>
<dbReference type="NCBIfam" id="NF006811">
    <property type="entry name" value="PRK09333.1"/>
    <property type="match status" value="1"/>
</dbReference>
<dbReference type="PANTHER" id="PTHR11710">
    <property type="entry name" value="40S RIBOSOMAL PROTEIN S19"/>
    <property type="match status" value="1"/>
</dbReference>
<dbReference type="PANTHER" id="PTHR11710:SF0">
    <property type="entry name" value="40S RIBOSOMAL PROTEIN S19"/>
    <property type="match status" value="1"/>
</dbReference>
<dbReference type="Pfam" id="PF01090">
    <property type="entry name" value="Ribosomal_S19e"/>
    <property type="match status" value="1"/>
</dbReference>
<dbReference type="SMART" id="SM01413">
    <property type="entry name" value="Ribosomal_S19e"/>
    <property type="match status" value="1"/>
</dbReference>
<dbReference type="SUPFAM" id="SSF46785">
    <property type="entry name" value="Winged helix' DNA-binding domain"/>
    <property type="match status" value="1"/>
</dbReference>
<dbReference type="PROSITE" id="PS00628">
    <property type="entry name" value="RIBOSOMAL_S19E"/>
    <property type="match status" value="1"/>
</dbReference>